<accession>O05101</accession>
<feature type="chain" id="PRO_0000082949" description="Methionyl-tRNA formyltransferase">
    <location>
        <begin position="1"/>
        <end position="310"/>
    </location>
</feature>
<feature type="binding site" evidence="1">
    <location>
        <begin position="110"/>
        <end position="113"/>
    </location>
    <ligand>
        <name>(6S)-5,6,7,8-tetrahydrofolate</name>
        <dbReference type="ChEBI" id="CHEBI:57453"/>
    </ligand>
</feature>
<dbReference type="EC" id="2.1.2.9" evidence="1"/>
<dbReference type="EMBL" id="AE001437">
    <property type="protein sequence ID" value="AAK79689.1"/>
    <property type="molecule type" value="Genomic_DNA"/>
</dbReference>
<dbReference type="EMBL" id="U52368">
    <property type="protein sequence ID" value="AAB50348.1"/>
    <property type="status" value="ALT_INIT"/>
    <property type="molecule type" value="Genomic_DNA"/>
</dbReference>
<dbReference type="PIR" id="F97112">
    <property type="entry name" value="F97112"/>
</dbReference>
<dbReference type="RefSeq" id="NP_348349.1">
    <property type="nucleotide sequence ID" value="NC_003030.1"/>
</dbReference>
<dbReference type="RefSeq" id="WP_010965030.1">
    <property type="nucleotide sequence ID" value="NC_003030.1"/>
</dbReference>
<dbReference type="SMR" id="O05101"/>
<dbReference type="STRING" id="272562.CA_C1723"/>
<dbReference type="GeneID" id="44998218"/>
<dbReference type="KEGG" id="cac:CA_C1723"/>
<dbReference type="PATRIC" id="fig|272562.8.peg.1925"/>
<dbReference type="eggNOG" id="COG0223">
    <property type="taxonomic scope" value="Bacteria"/>
</dbReference>
<dbReference type="HOGENOM" id="CLU_033347_1_1_9"/>
<dbReference type="OrthoDB" id="9802815at2"/>
<dbReference type="Proteomes" id="UP000000814">
    <property type="component" value="Chromosome"/>
</dbReference>
<dbReference type="GO" id="GO:0005829">
    <property type="term" value="C:cytosol"/>
    <property type="evidence" value="ECO:0007669"/>
    <property type="project" value="TreeGrafter"/>
</dbReference>
<dbReference type="GO" id="GO:0004479">
    <property type="term" value="F:methionyl-tRNA formyltransferase activity"/>
    <property type="evidence" value="ECO:0007669"/>
    <property type="project" value="UniProtKB-UniRule"/>
</dbReference>
<dbReference type="CDD" id="cd08646">
    <property type="entry name" value="FMT_core_Met-tRNA-FMT_N"/>
    <property type="match status" value="1"/>
</dbReference>
<dbReference type="CDD" id="cd08704">
    <property type="entry name" value="Met_tRNA_FMT_C"/>
    <property type="match status" value="1"/>
</dbReference>
<dbReference type="FunFam" id="3.40.50.12230:FF:000001">
    <property type="entry name" value="Methionyl-tRNA formyltransferase"/>
    <property type="match status" value="1"/>
</dbReference>
<dbReference type="Gene3D" id="3.40.50.12230">
    <property type="match status" value="1"/>
</dbReference>
<dbReference type="HAMAP" id="MF_00182">
    <property type="entry name" value="Formyl_trans"/>
    <property type="match status" value="1"/>
</dbReference>
<dbReference type="InterPro" id="IPR005794">
    <property type="entry name" value="Fmt"/>
</dbReference>
<dbReference type="InterPro" id="IPR005793">
    <property type="entry name" value="Formyl_trans_C"/>
</dbReference>
<dbReference type="InterPro" id="IPR002376">
    <property type="entry name" value="Formyl_transf_N"/>
</dbReference>
<dbReference type="InterPro" id="IPR036477">
    <property type="entry name" value="Formyl_transf_N_sf"/>
</dbReference>
<dbReference type="InterPro" id="IPR011034">
    <property type="entry name" value="Formyl_transferase-like_C_sf"/>
</dbReference>
<dbReference type="InterPro" id="IPR044135">
    <property type="entry name" value="Met-tRNA-FMT_C"/>
</dbReference>
<dbReference type="InterPro" id="IPR041711">
    <property type="entry name" value="Met-tRNA-FMT_N"/>
</dbReference>
<dbReference type="NCBIfam" id="TIGR00460">
    <property type="entry name" value="fmt"/>
    <property type="match status" value="1"/>
</dbReference>
<dbReference type="PANTHER" id="PTHR11138">
    <property type="entry name" value="METHIONYL-TRNA FORMYLTRANSFERASE"/>
    <property type="match status" value="1"/>
</dbReference>
<dbReference type="PANTHER" id="PTHR11138:SF5">
    <property type="entry name" value="METHIONYL-TRNA FORMYLTRANSFERASE, MITOCHONDRIAL"/>
    <property type="match status" value="1"/>
</dbReference>
<dbReference type="Pfam" id="PF02911">
    <property type="entry name" value="Formyl_trans_C"/>
    <property type="match status" value="1"/>
</dbReference>
<dbReference type="Pfam" id="PF00551">
    <property type="entry name" value="Formyl_trans_N"/>
    <property type="match status" value="1"/>
</dbReference>
<dbReference type="SUPFAM" id="SSF50486">
    <property type="entry name" value="FMT C-terminal domain-like"/>
    <property type="match status" value="1"/>
</dbReference>
<dbReference type="SUPFAM" id="SSF53328">
    <property type="entry name" value="Formyltransferase"/>
    <property type="match status" value="1"/>
</dbReference>
<gene>
    <name evidence="1" type="primary">fmt</name>
    <name type="ordered locus">CA_C1723</name>
</gene>
<organism>
    <name type="scientific">Clostridium acetobutylicum (strain ATCC 824 / DSM 792 / JCM 1419 / IAM 19013 / LMG 5710 / NBRC 13948 / NRRL B-527 / VKM B-1787 / 2291 / W)</name>
    <dbReference type="NCBI Taxonomy" id="272562"/>
    <lineage>
        <taxon>Bacteria</taxon>
        <taxon>Bacillati</taxon>
        <taxon>Bacillota</taxon>
        <taxon>Clostridia</taxon>
        <taxon>Eubacteriales</taxon>
        <taxon>Clostridiaceae</taxon>
        <taxon>Clostridium</taxon>
    </lineage>
</organism>
<proteinExistence type="inferred from homology"/>
<name>FMT_CLOAB</name>
<reference key="1">
    <citation type="journal article" date="2001" name="J. Bacteriol.">
        <title>Genome sequence and comparative analysis of the solvent-producing bacterium Clostridium acetobutylicum.</title>
        <authorList>
            <person name="Noelling J."/>
            <person name="Breton G."/>
            <person name="Omelchenko M.V."/>
            <person name="Makarova K.S."/>
            <person name="Zeng Q."/>
            <person name="Gibson R."/>
            <person name="Lee H.M."/>
            <person name="Dubois J."/>
            <person name="Qiu D."/>
            <person name="Hitti J."/>
            <person name="Wolf Y.I."/>
            <person name="Tatusov R.L."/>
            <person name="Sabathe F."/>
            <person name="Doucette-Stamm L.A."/>
            <person name="Soucaille P."/>
            <person name="Daly M.J."/>
            <person name="Bennett G.N."/>
            <person name="Koonin E.V."/>
            <person name="Smith D.R."/>
        </authorList>
    </citation>
    <scope>NUCLEOTIDE SEQUENCE [LARGE SCALE GENOMIC DNA]</scope>
    <source>
        <strain>ATCC 824 / DSM 792 / JCM 1419 / IAM 19013 / LMG 5710 / NBRC 13948 / NRRL B-527 / VKM B-1787 / 2291 / W</strain>
    </source>
</reference>
<reference key="2">
    <citation type="journal article" date="1998" name="Curr. Microbiol.">
        <title>Complementation of an Escherichia coli polypeptide deformylase mutant with a gene from Clostridium acetobutylicum ATCC 824.</title>
        <authorList>
            <person name="Belouski E."/>
            <person name="Gui L."/>
            <person name="Rudolph F.B."/>
            <person name="Bennett G.N."/>
        </authorList>
    </citation>
    <scope>NUCLEOTIDE SEQUENCE [GENOMIC DNA] OF 1-173</scope>
    <source>
        <strain>ATCC 824 / DSM 792 / JCM 1419 / IAM 19013 / LMG 5710 / NBRC 13948 / NRRL B-527 / VKM B-1787 / 2291 / W</strain>
    </source>
</reference>
<sequence>MLKIVFMGTPEFSVPSLEKLIENYDVRAVLTQPDKPKGRGKKLAMSEVKEVAVKNNIPVFQPVKLKNDIEVINKLKEIAPDFIVVVAFGQILSKEVLDIPKYACINLHASLLPNYRGAAPINWAIINGETKTGNTTMIMAEGLDTGDMLLKDEVDIKRDMTAGELHDILMNRGADLLVKTIDEFSKGNIKPEKQGEPETDYAAMLSKDTGKINWNDKSERIYNLIRGLNPWPLAYSSYNDKVMKIHEAKILDAAPEGEPGLITNVDNNGIEVNSSDGKILITKIQFPGKKSMNVGEYIRGNNIDKGVILK</sequence>
<keyword id="KW-0648">Protein biosynthesis</keyword>
<keyword id="KW-1185">Reference proteome</keyword>
<keyword id="KW-0808">Transferase</keyword>
<evidence type="ECO:0000255" key="1">
    <source>
        <dbReference type="HAMAP-Rule" id="MF_00182"/>
    </source>
</evidence>
<evidence type="ECO:0000305" key="2"/>
<comment type="function">
    <text evidence="1">Attaches a formyl group to the free amino group of methionyl-tRNA(fMet). The formyl group appears to play a dual role in the initiator identity of N-formylmethionyl-tRNA by promoting its recognition by IF2 and preventing the misappropriation of this tRNA by the elongation apparatus.</text>
</comment>
<comment type="catalytic activity">
    <reaction evidence="1">
        <text>L-methionyl-tRNA(fMet) + (6R)-10-formyltetrahydrofolate = N-formyl-L-methionyl-tRNA(fMet) + (6S)-5,6,7,8-tetrahydrofolate + H(+)</text>
        <dbReference type="Rhea" id="RHEA:24380"/>
        <dbReference type="Rhea" id="RHEA-COMP:9952"/>
        <dbReference type="Rhea" id="RHEA-COMP:9953"/>
        <dbReference type="ChEBI" id="CHEBI:15378"/>
        <dbReference type="ChEBI" id="CHEBI:57453"/>
        <dbReference type="ChEBI" id="CHEBI:78530"/>
        <dbReference type="ChEBI" id="CHEBI:78844"/>
        <dbReference type="ChEBI" id="CHEBI:195366"/>
        <dbReference type="EC" id="2.1.2.9"/>
    </reaction>
</comment>
<comment type="similarity">
    <text evidence="1 2">Belongs to the Fmt family.</text>
</comment>
<comment type="sequence caution" evidence="2">
    <conflict type="erroneous initiation">
        <sequence resource="EMBL-CDS" id="AAB50348"/>
    </conflict>
</comment>
<protein>
    <recommendedName>
        <fullName evidence="1">Methionyl-tRNA formyltransferase</fullName>
        <ecNumber evidence="1">2.1.2.9</ecNumber>
    </recommendedName>
</protein>